<dbReference type="EC" id="2.5.1.54"/>
<dbReference type="EMBL" id="AE005674">
    <property type="protein sequence ID" value="AAN43116.1"/>
    <property type="molecule type" value="Genomic_DNA"/>
</dbReference>
<dbReference type="EMBL" id="AE014073">
    <property type="protein sequence ID" value="AAP17007.1"/>
    <property type="molecule type" value="Genomic_DNA"/>
</dbReference>
<dbReference type="RefSeq" id="NP_707409.1">
    <property type="nucleotide sequence ID" value="NC_004337.2"/>
</dbReference>
<dbReference type="RefSeq" id="WP_001082230.1">
    <property type="nucleotide sequence ID" value="NZ_WPGW01000051.1"/>
</dbReference>
<dbReference type="SMR" id="P59736"/>
<dbReference type="STRING" id="198214.SF1526"/>
<dbReference type="PaxDb" id="198214-SF1526"/>
<dbReference type="GeneID" id="1024719"/>
<dbReference type="KEGG" id="sfl:SF1526"/>
<dbReference type="KEGG" id="sfx:S1644"/>
<dbReference type="PATRIC" id="fig|198214.7.peg.1802"/>
<dbReference type="HOGENOM" id="CLU_030903_0_1_6"/>
<dbReference type="UniPathway" id="UPA00053">
    <property type="reaction ID" value="UER00084"/>
</dbReference>
<dbReference type="Proteomes" id="UP000001006">
    <property type="component" value="Chromosome"/>
</dbReference>
<dbReference type="Proteomes" id="UP000002673">
    <property type="component" value="Chromosome"/>
</dbReference>
<dbReference type="GO" id="GO:0005737">
    <property type="term" value="C:cytoplasm"/>
    <property type="evidence" value="ECO:0007669"/>
    <property type="project" value="TreeGrafter"/>
</dbReference>
<dbReference type="GO" id="GO:0003849">
    <property type="term" value="F:3-deoxy-7-phosphoheptulonate synthase activity"/>
    <property type="evidence" value="ECO:0007669"/>
    <property type="project" value="UniProtKB-EC"/>
</dbReference>
<dbReference type="GO" id="GO:0008652">
    <property type="term" value="P:amino acid biosynthetic process"/>
    <property type="evidence" value="ECO:0007669"/>
    <property type="project" value="UniProtKB-KW"/>
</dbReference>
<dbReference type="GO" id="GO:0009073">
    <property type="term" value="P:aromatic amino acid family biosynthetic process"/>
    <property type="evidence" value="ECO:0007669"/>
    <property type="project" value="UniProtKB-KW"/>
</dbReference>
<dbReference type="GO" id="GO:0009423">
    <property type="term" value="P:chorismate biosynthetic process"/>
    <property type="evidence" value="ECO:0007669"/>
    <property type="project" value="UniProtKB-UniPathway"/>
</dbReference>
<dbReference type="FunFam" id="3.20.20.70:FF:000005">
    <property type="entry name" value="Phospho-2-dehydro-3-deoxyheptonate aldolase"/>
    <property type="match status" value="1"/>
</dbReference>
<dbReference type="Gene3D" id="3.20.20.70">
    <property type="entry name" value="Aldolase class I"/>
    <property type="match status" value="1"/>
</dbReference>
<dbReference type="InterPro" id="IPR013785">
    <property type="entry name" value="Aldolase_TIM"/>
</dbReference>
<dbReference type="InterPro" id="IPR006218">
    <property type="entry name" value="DAHP1/KDSA"/>
</dbReference>
<dbReference type="InterPro" id="IPR006219">
    <property type="entry name" value="DAHP_synth_1"/>
</dbReference>
<dbReference type="NCBIfam" id="TIGR00034">
    <property type="entry name" value="aroFGH"/>
    <property type="match status" value="1"/>
</dbReference>
<dbReference type="NCBIfam" id="NF009395">
    <property type="entry name" value="PRK12755.1"/>
    <property type="match status" value="1"/>
</dbReference>
<dbReference type="NCBIfam" id="NF009396">
    <property type="entry name" value="PRK12756.1"/>
    <property type="match status" value="1"/>
</dbReference>
<dbReference type="PANTHER" id="PTHR21225">
    <property type="entry name" value="PHOSPHO-2-DEHYDRO-3-DEOXYHEPTONATE ALDOLASE DAHP SYNTHETASE"/>
    <property type="match status" value="1"/>
</dbReference>
<dbReference type="PANTHER" id="PTHR21225:SF6">
    <property type="entry name" value="PHOSPHO-2-DEHYDRO-3-DEOXYHEPTONATE ALDOLASE, TRP-SENSITIVE"/>
    <property type="match status" value="1"/>
</dbReference>
<dbReference type="Pfam" id="PF00793">
    <property type="entry name" value="DAHP_synth_1"/>
    <property type="match status" value="1"/>
</dbReference>
<dbReference type="PIRSF" id="PIRSF001361">
    <property type="entry name" value="DAHP_synthase"/>
    <property type="match status" value="1"/>
</dbReference>
<dbReference type="SUPFAM" id="SSF51569">
    <property type="entry name" value="Aldolase"/>
    <property type="match status" value="1"/>
</dbReference>
<feature type="chain" id="PRO_0000140846" description="Phospho-2-dehydro-3-deoxyheptonate aldolase, Trp-sensitive">
    <location>
        <begin position="1"/>
        <end position="348"/>
    </location>
</feature>
<accession>P59736</accession>
<organism>
    <name type="scientific">Shigella flexneri</name>
    <dbReference type="NCBI Taxonomy" id="623"/>
    <lineage>
        <taxon>Bacteria</taxon>
        <taxon>Pseudomonadati</taxon>
        <taxon>Pseudomonadota</taxon>
        <taxon>Gammaproteobacteria</taxon>
        <taxon>Enterobacterales</taxon>
        <taxon>Enterobacteriaceae</taxon>
        <taxon>Shigella</taxon>
    </lineage>
</organism>
<proteinExistence type="inferred from homology"/>
<comment type="function">
    <text evidence="1">Stereospecific condensation of phosphoenolpyruvate (PEP) and D-erythrose-4-phosphate (E4P) giving rise to 3-deoxy-D-arabino-heptulosonate-7-phosphate (DAHP).</text>
</comment>
<comment type="catalytic activity">
    <reaction>
        <text>D-erythrose 4-phosphate + phosphoenolpyruvate + H2O = 7-phospho-2-dehydro-3-deoxy-D-arabino-heptonate + phosphate</text>
        <dbReference type="Rhea" id="RHEA:14717"/>
        <dbReference type="ChEBI" id="CHEBI:15377"/>
        <dbReference type="ChEBI" id="CHEBI:16897"/>
        <dbReference type="ChEBI" id="CHEBI:43474"/>
        <dbReference type="ChEBI" id="CHEBI:58394"/>
        <dbReference type="ChEBI" id="CHEBI:58702"/>
        <dbReference type="EC" id="2.5.1.54"/>
    </reaction>
</comment>
<comment type="pathway">
    <text>Metabolic intermediate biosynthesis; chorismate biosynthesis; chorismate from D-erythrose 4-phosphate and phosphoenolpyruvate: step 1/7.</text>
</comment>
<comment type="similarity">
    <text evidence="2">Belongs to the class-I DAHP synthase family.</text>
</comment>
<keyword id="KW-0028">Amino-acid biosynthesis</keyword>
<keyword id="KW-0057">Aromatic amino acid biosynthesis</keyword>
<keyword id="KW-1185">Reference proteome</keyword>
<keyword id="KW-0808">Transferase</keyword>
<gene>
    <name type="primary">aroH</name>
    <name type="ordered locus">SF1526</name>
    <name type="ordered locus">S1644</name>
</gene>
<protein>
    <recommendedName>
        <fullName>Phospho-2-dehydro-3-deoxyheptonate aldolase, Trp-sensitive</fullName>
        <ecNumber>2.5.1.54</ecNumber>
    </recommendedName>
    <alternativeName>
        <fullName>3-deoxy-D-arabino-heptulosonate 7-phosphate synthase</fullName>
    </alternativeName>
    <alternativeName>
        <fullName>DAHP synthase</fullName>
    </alternativeName>
    <alternativeName>
        <fullName>Phospho-2-keto-3-deoxyheptonate aldolase</fullName>
    </alternativeName>
</protein>
<sequence length="348" mass="38823">MNRTDELRTARIESLVTPAELALRYPVTPGVATHVTDSRRRIEKILNGEDKRLLVIIGPCSIHDLTAAMEYATRLQSLRNQYQSRLEIVMRTYFEKPRTVVGWKGLISDPDLNGSYRVNHGLELARKLLLQVNELGVPTATEFLDMVTGQFIADLISWGAIGARTTESQIHREMASALSCPVGFKNGTDGNTRIAVDAIRAARASHMFLSPDKNGQMTIYQTSGNPYGHIIMRGGKKPNYHADDIAAACDTLHEFDLPEHLVVDFSHGNCQKQHRRQLEVCEDICQQIRNGSTEIAGIMAESFLREGTQKIVGGQPLTYGQSITDPCLGWEDTERLVEKLAFAVDTRF</sequence>
<name>AROH_SHIFL</name>
<evidence type="ECO:0000250" key="1"/>
<evidence type="ECO:0000305" key="2"/>
<reference key="1">
    <citation type="journal article" date="2002" name="Nucleic Acids Res.">
        <title>Genome sequence of Shigella flexneri 2a: insights into pathogenicity through comparison with genomes of Escherichia coli K12 and O157.</title>
        <authorList>
            <person name="Jin Q."/>
            <person name="Yuan Z."/>
            <person name="Xu J."/>
            <person name="Wang Y."/>
            <person name="Shen Y."/>
            <person name="Lu W."/>
            <person name="Wang J."/>
            <person name="Liu H."/>
            <person name="Yang J."/>
            <person name="Yang F."/>
            <person name="Zhang X."/>
            <person name="Zhang J."/>
            <person name="Yang G."/>
            <person name="Wu H."/>
            <person name="Qu D."/>
            <person name="Dong J."/>
            <person name="Sun L."/>
            <person name="Xue Y."/>
            <person name="Zhao A."/>
            <person name="Gao Y."/>
            <person name="Zhu J."/>
            <person name="Kan B."/>
            <person name="Ding K."/>
            <person name="Chen S."/>
            <person name="Cheng H."/>
            <person name="Yao Z."/>
            <person name="He B."/>
            <person name="Chen R."/>
            <person name="Ma D."/>
            <person name="Qiang B."/>
            <person name="Wen Y."/>
            <person name="Hou Y."/>
            <person name="Yu J."/>
        </authorList>
    </citation>
    <scope>NUCLEOTIDE SEQUENCE [LARGE SCALE GENOMIC DNA]</scope>
    <source>
        <strain>301 / Serotype 2a</strain>
    </source>
</reference>
<reference key="2">
    <citation type="journal article" date="2003" name="Infect. Immun.">
        <title>Complete genome sequence and comparative genomics of Shigella flexneri serotype 2a strain 2457T.</title>
        <authorList>
            <person name="Wei J."/>
            <person name="Goldberg M.B."/>
            <person name="Burland V."/>
            <person name="Venkatesan M.M."/>
            <person name="Deng W."/>
            <person name="Fournier G."/>
            <person name="Mayhew G.F."/>
            <person name="Plunkett G. III"/>
            <person name="Rose D.J."/>
            <person name="Darling A."/>
            <person name="Mau B."/>
            <person name="Perna N.T."/>
            <person name="Payne S.M."/>
            <person name="Runyen-Janecky L.J."/>
            <person name="Zhou S."/>
            <person name="Schwartz D.C."/>
            <person name="Blattner F.R."/>
        </authorList>
    </citation>
    <scope>NUCLEOTIDE SEQUENCE [LARGE SCALE GENOMIC DNA]</scope>
    <source>
        <strain>ATCC 700930 / 2457T / Serotype 2a</strain>
    </source>
</reference>